<dbReference type="EMBL" id="CP001043">
    <property type="protein sequence ID" value="ACC70737.1"/>
    <property type="molecule type" value="Genomic_DNA"/>
</dbReference>
<dbReference type="RefSeq" id="WP_004192938.1">
    <property type="nucleotide sequence ID" value="NZ_CADFGH010000004.1"/>
</dbReference>
<dbReference type="SMR" id="B2JJJ4"/>
<dbReference type="STRING" id="391038.Bphy_1555"/>
<dbReference type="GeneID" id="98102114"/>
<dbReference type="KEGG" id="bph:Bphy_1555"/>
<dbReference type="eggNOG" id="COG0292">
    <property type="taxonomic scope" value="Bacteria"/>
</dbReference>
<dbReference type="HOGENOM" id="CLU_123265_0_1_4"/>
<dbReference type="OrthoDB" id="9808966at2"/>
<dbReference type="Proteomes" id="UP000001192">
    <property type="component" value="Chromosome 1"/>
</dbReference>
<dbReference type="GO" id="GO:1990904">
    <property type="term" value="C:ribonucleoprotein complex"/>
    <property type="evidence" value="ECO:0007669"/>
    <property type="project" value="UniProtKB-KW"/>
</dbReference>
<dbReference type="GO" id="GO:0005840">
    <property type="term" value="C:ribosome"/>
    <property type="evidence" value="ECO:0007669"/>
    <property type="project" value="UniProtKB-KW"/>
</dbReference>
<dbReference type="GO" id="GO:0019843">
    <property type="term" value="F:rRNA binding"/>
    <property type="evidence" value="ECO:0007669"/>
    <property type="project" value="UniProtKB-UniRule"/>
</dbReference>
<dbReference type="GO" id="GO:0003735">
    <property type="term" value="F:structural constituent of ribosome"/>
    <property type="evidence" value="ECO:0007669"/>
    <property type="project" value="InterPro"/>
</dbReference>
<dbReference type="GO" id="GO:0000027">
    <property type="term" value="P:ribosomal large subunit assembly"/>
    <property type="evidence" value="ECO:0007669"/>
    <property type="project" value="UniProtKB-UniRule"/>
</dbReference>
<dbReference type="GO" id="GO:0006412">
    <property type="term" value="P:translation"/>
    <property type="evidence" value="ECO:0007669"/>
    <property type="project" value="InterPro"/>
</dbReference>
<dbReference type="CDD" id="cd07026">
    <property type="entry name" value="Ribosomal_L20"/>
    <property type="match status" value="1"/>
</dbReference>
<dbReference type="FunFam" id="1.10.1900.20:FF:000001">
    <property type="entry name" value="50S ribosomal protein L20"/>
    <property type="match status" value="1"/>
</dbReference>
<dbReference type="Gene3D" id="6.10.160.10">
    <property type="match status" value="1"/>
</dbReference>
<dbReference type="Gene3D" id="1.10.1900.20">
    <property type="entry name" value="Ribosomal protein L20"/>
    <property type="match status" value="1"/>
</dbReference>
<dbReference type="HAMAP" id="MF_00382">
    <property type="entry name" value="Ribosomal_bL20"/>
    <property type="match status" value="1"/>
</dbReference>
<dbReference type="InterPro" id="IPR005813">
    <property type="entry name" value="Ribosomal_bL20"/>
</dbReference>
<dbReference type="InterPro" id="IPR049946">
    <property type="entry name" value="RIBOSOMAL_L20_CS"/>
</dbReference>
<dbReference type="InterPro" id="IPR035566">
    <property type="entry name" value="Ribosomal_protein_bL20_C"/>
</dbReference>
<dbReference type="NCBIfam" id="TIGR01032">
    <property type="entry name" value="rplT_bact"/>
    <property type="match status" value="1"/>
</dbReference>
<dbReference type="PANTHER" id="PTHR10986">
    <property type="entry name" value="39S RIBOSOMAL PROTEIN L20"/>
    <property type="match status" value="1"/>
</dbReference>
<dbReference type="Pfam" id="PF00453">
    <property type="entry name" value="Ribosomal_L20"/>
    <property type="match status" value="1"/>
</dbReference>
<dbReference type="PRINTS" id="PR00062">
    <property type="entry name" value="RIBOSOMALL20"/>
</dbReference>
<dbReference type="SUPFAM" id="SSF74731">
    <property type="entry name" value="Ribosomal protein L20"/>
    <property type="match status" value="1"/>
</dbReference>
<dbReference type="PROSITE" id="PS00937">
    <property type="entry name" value="RIBOSOMAL_L20"/>
    <property type="match status" value="1"/>
</dbReference>
<organism>
    <name type="scientific">Paraburkholderia phymatum (strain DSM 17167 / CIP 108236 / LMG 21445 / STM815)</name>
    <name type="common">Burkholderia phymatum</name>
    <dbReference type="NCBI Taxonomy" id="391038"/>
    <lineage>
        <taxon>Bacteria</taxon>
        <taxon>Pseudomonadati</taxon>
        <taxon>Pseudomonadota</taxon>
        <taxon>Betaproteobacteria</taxon>
        <taxon>Burkholderiales</taxon>
        <taxon>Burkholderiaceae</taxon>
        <taxon>Paraburkholderia</taxon>
    </lineage>
</organism>
<accession>B2JJJ4</accession>
<reference key="1">
    <citation type="journal article" date="2014" name="Stand. Genomic Sci.">
        <title>Complete genome sequence of Burkholderia phymatum STM815(T), a broad host range and efficient nitrogen-fixing symbiont of Mimosa species.</title>
        <authorList>
            <person name="Moulin L."/>
            <person name="Klonowska A."/>
            <person name="Caroline B."/>
            <person name="Booth K."/>
            <person name="Vriezen J.A."/>
            <person name="Melkonian R."/>
            <person name="James E.K."/>
            <person name="Young J.P."/>
            <person name="Bena G."/>
            <person name="Hauser L."/>
            <person name="Land M."/>
            <person name="Kyrpides N."/>
            <person name="Bruce D."/>
            <person name="Chain P."/>
            <person name="Copeland A."/>
            <person name="Pitluck S."/>
            <person name="Woyke T."/>
            <person name="Lizotte-Waniewski M."/>
            <person name="Bristow J."/>
            <person name="Riley M."/>
        </authorList>
    </citation>
    <scope>NUCLEOTIDE SEQUENCE [LARGE SCALE GENOMIC DNA]</scope>
    <source>
        <strain>DSM 17167 / CIP 108236 / LMG 21445 / STM815</strain>
    </source>
</reference>
<name>RL20_PARP8</name>
<proteinExistence type="inferred from homology"/>
<protein>
    <recommendedName>
        <fullName evidence="1">Large ribosomal subunit protein bL20</fullName>
    </recommendedName>
    <alternativeName>
        <fullName evidence="2">50S ribosomal protein L20</fullName>
    </alternativeName>
</protein>
<evidence type="ECO:0000255" key="1">
    <source>
        <dbReference type="HAMAP-Rule" id="MF_00382"/>
    </source>
</evidence>
<evidence type="ECO:0000305" key="2"/>
<comment type="function">
    <text evidence="1">Binds directly to 23S ribosomal RNA and is necessary for the in vitro assembly process of the 50S ribosomal subunit. It is not involved in the protein synthesizing functions of that subunit.</text>
</comment>
<comment type="similarity">
    <text evidence="1">Belongs to the bacterial ribosomal protein bL20 family.</text>
</comment>
<gene>
    <name evidence="1" type="primary">rplT</name>
    <name type="ordered locus">Bphy_1555</name>
</gene>
<feature type="chain" id="PRO_1000122286" description="Large ribosomal subunit protein bL20">
    <location>
        <begin position="1"/>
        <end position="119"/>
    </location>
</feature>
<keyword id="KW-1185">Reference proteome</keyword>
<keyword id="KW-0687">Ribonucleoprotein</keyword>
<keyword id="KW-0689">Ribosomal protein</keyword>
<keyword id="KW-0694">RNA-binding</keyword>
<keyword id="KW-0699">rRNA-binding</keyword>
<sequence>MPRVKRGVTARARHKKIINLAKGYRGRRNNVYRIAKQAVMRAGQYAYRDRRNKKRVFRALWITRINAAVRQHDMTYSVFINGLKKASIELDRKVLADMAVFDKAAFAAIVKQVKAAVAA</sequence>